<keyword id="KW-0067">ATP-binding</keyword>
<keyword id="KW-0315">Glutamine amidotransferase</keyword>
<keyword id="KW-0436">Ligase</keyword>
<keyword id="KW-0460">Magnesium</keyword>
<keyword id="KW-0479">Metal-binding</keyword>
<keyword id="KW-0547">Nucleotide-binding</keyword>
<keyword id="KW-0665">Pyrimidine biosynthesis</keyword>
<keyword id="KW-1185">Reference proteome</keyword>
<organism>
    <name type="scientific">Escherichia coli O139:H28 (strain E24377A / ETEC)</name>
    <dbReference type="NCBI Taxonomy" id="331111"/>
    <lineage>
        <taxon>Bacteria</taxon>
        <taxon>Pseudomonadati</taxon>
        <taxon>Pseudomonadota</taxon>
        <taxon>Gammaproteobacteria</taxon>
        <taxon>Enterobacterales</taxon>
        <taxon>Enterobacteriaceae</taxon>
        <taxon>Escherichia</taxon>
    </lineage>
</organism>
<accession>A7ZQM3</accession>
<evidence type="ECO:0000255" key="1">
    <source>
        <dbReference type="HAMAP-Rule" id="MF_01227"/>
    </source>
</evidence>
<sequence length="545" mass="60374">MTTNYIFVTGGVVSSLGKGIAAASLAAILEARGLNVTIMKLDPYINVDPGTMSPIQHGEVFVTEDGAETDLDLGHYERFIRTKMSRRNNFTTGRIYSDVLRKERRGDYLGATVQVIPHITNAIKERVLEGGEGHDVVLVEIGGTVGDIESLPFLEAIRQMAVEIGREHTLFMHLTLVPYMAASGEVKTKPTQHSVKELLSIGIQPDILICRSDRAVPANERAKIALFCNVPEKAVISLKDVDSIYKIPGLLKSQGLDDYICKRFSLNCPEANLSEWEQVIFEEANPVSEVTIGMVGKYIELPDAYKSVIEALKHGGLKNRVSVNIKLIDSQDVETRGVEILKGLDAILVPGGFGYRGVEGMITTARFARENNIPYLGICLGMQVALIDYARHVANMENANSTEFVPDCKYPVVALITEWRDENGNVEVRSEKSDLGGTMRLGAQQCQLVDDSLVRQLYNAPTIVERHRHRYEVNNMLLKQIEDAGLRVAGRSGDDQLVEIIEVPNHPWFVACQFHPEFTSTPRDGHPLFAGFVKAASEFQKRQAK</sequence>
<gene>
    <name evidence="1" type="primary">pyrG</name>
    <name type="ordered locus">EcE24377A_3084</name>
</gene>
<proteinExistence type="inferred from homology"/>
<feature type="chain" id="PRO_1000139439" description="CTP synthase">
    <location>
        <begin position="1"/>
        <end position="545"/>
    </location>
</feature>
<feature type="domain" description="Glutamine amidotransferase type-1" evidence="1">
    <location>
        <begin position="291"/>
        <end position="542"/>
    </location>
</feature>
<feature type="region of interest" description="Amidoligase domain" evidence="1">
    <location>
        <begin position="1"/>
        <end position="266"/>
    </location>
</feature>
<feature type="active site" description="Nucleophile; for glutamine hydrolysis" evidence="1">
    <location>
        <position position="379"/>
    </location>
</feature>
<feature type="active site" evidence="1">
    <location>
        <position position="515"/>
    </location>
</feature>
<feature type="active site" evidence="1">
    <location>
        <position position="517"/>
    </location>
</feature>
<feature type="binding site" evidence="1">
    <location>
        <position position="14"/>
    </location>
    <ligand>
        <name>CTP</name>
        <dbReference type="ChEBI" id="CHEBI:37563"/>
        <note>allosteric inhibitor</note>
    </ligand>
</feature>
<feature type="binding site" evidence="1">
    <location>
        <position position="14"/>
    </location>
    <ligand>
        <name>UTP</name>
        <dbReference type="ChEBI" id="CHEBI:46398"/>
    </ligand>
</feature>
<feature type="binding site" evidence="1">
    <location>
        <begin position="15"/>
        <end position="20"/>
    </location>
    <ligand>
        <name>ATP</name>
        <dbReference type="ChEBI" id="CHEBI:30616"/>
    </ligand>
</feature>
<feature type="binding site" evidence="1">
    <location>
        <position position="72"/>
    </location>
    <ligand>
        <name>ATP</name>
        <dbReference type="ChEBI" id="CHEBI:30616"/>
    </ligand>
</feature>
<feature type="binding site" evidence="1">
    <location>
        <position position="72"/>
    </location>
    <ligand>
        <name>Mg(2+)</name>
        <dbReference type="ChEBI" id="CHEBI:18420"/>
    </ligand>
</feature>
<feature type="binding site" evidence="1">
    <location>
        <position position="140"/>
    </location>
    <ligand>
        <name>Mg(2+)</name>
        <dbReference type="ChEBI" id="CHEBI:18420"/>
    </ligand>
</feature>
<feature type="binding site" evidence="1">
    <location>
        <begin position="147"/>
        <end position="149"/>
    </location>
    <ligand>
        <name>CTP</name>
        <dbReference type="ChEBI" id="CHEBI:37563"/>
        <note>allosteric inhibitor</note>
    </ligand>
</feature>
<feature type="binding site" evidence="1">
    <location>
        <begin position="187"/>
        <end position="192"/>
    </location>
    <ligand>
        <name>CTP</name>
        <dbReference type="ChEBI" id="CHEBI:37563"/>
        <note>allosteric inhibitor</note>
    </ligand>
</feature>
<feature type="binding site" evidence="1">
    <location>
        <begin position="187"/>
        <end position="192"/>
    </location>
    <ligand>
        <name>UTP</name>
        <dbReference type="ChEBI" id="CHEBI:46398"/>
    </ligand>
</feature>
<feature type="binding site" evidence="1">
    <location>
        <position position="223"/>
    </location>
    <ligand>
        <name>CTP</name>
        <dbReference type="ChEBI" id="CHEBI:37563"/>
        <note>allosteric inhibitor</note>
    </ligand>
</feature>
<feature type="binding site" evidence="1">
    <location>
        <position position="223"/>
    </location>
    <ligand>
        <name>UTP</name>
        <dbReference type="ChEBI" id="CHEBI:46398"/>
    </ligand>
</feature>
<feature type="binding site" evidence="1">
    <location>
        <begin position="239"/>
        <end position="241"/>
    </location>
    <ligand>
        <name>ATP</name>
        <dbReference type="ChEBI" id="CHEBI:30616"/>
    </ligand>
</feature>
<feature type="binding site" evidence="1">
    <location>
        <position position="352"/>
    </location>
    <ligand>
        <name>L-glutamine</name>
        <dbReference type="ChEBI" id="CHEBI:58359"/>
    </ligand>
</feature>
<feature type="binding site" evidence="1">
    <location>
        <begin position="380"/>
        <end position="383"/>
    </location>
    <ligand>
        <name>L-glutamine</name>
        <dbReference type="ChEBI" id="CHEBI:58359"/>
    </ligand>
</feature>
<feature type="binding site" evidence="1">
    <location>
        <position position="403"/>
    </location>
    <ligand>
        <name>L-glutamine</name>
        <dbReference type="ChEBI" id="CHEBI:58359"/>
    </ligand>
</feature>
<feature type="binding site" evidence="1">
    <location>
        <position position="470"/>
    </location>
    <ligand>
        <name>L-glutamine</name>
        <dbReference type="ChEBI" id="CHEBI:58359"/>
    </ligand>
</feature>
<reference key="1">
    <citation type="journal article" date="2008" name="J. Bacteriol.">
        <title>The pangenome structure of Escherichia coli: comparative genomic analysis of E. coli commensal and pathogenic isolates.</title>
        <authorList>
            <person name="Rasko D.A."/>
            <person name="Rosovitz M.J."/>
            <person name="Myers G.S.A."/>
            <person name="Mongodin E.F."/>
            <person name="Fricke W.F."/>
            <person name="Gajer P."/>
            <person name="Crabtree J."/>
            <person name="Sebaihia M."/>
            <person name="Thomson N.R."/>
            <person name="Chaudhuri R."/>
            <person name="Henderson I.R."/>
            <person name="Sperandio V."/>
            <person name="Ravel J."/>
        </authorList>
    </citation>
    <scope>NUCLEOTIDE SEQUENCE [LARGE SCALE GENOMIC DNA]</scope>
    <source>
        <strain>E24377A / ETEC</strain>
    </source>
</reference>
<comment type="function">
    <text evidence="1">Catalyzes the ATP-dependent amination of UTP to CTP with either L-glutamine or ammonia as the source of nitrogen. Regulates intracellular CTP levels through interactions with the four ribonucleotide triphosphates.</text>
</comment>
<comment type="catalytic activity">
    <reaction evidence="1">
        <text>UTP + L-glutamine + ATP + H2O = CTP + L-glutamate + ADP + phosphate + 2 H(+)</text>
        <dbReference type="Rhea" id="RHEA:26426"/>
        <dbReference type="ChEBI" id="CHEBI:15377"/>
        <dbReference type="ChEBI" id="CHEBI:15378"/>
        <dbReference type="ChEBI" id="CHEBI:29985"/>
        <dbReference type="ChEBI" id="CHEBI:30616"/>
        <dbReference type="ChEBI" id="CHEBI:37563"/>
        <dbReference type="ChEBI" id="CHEBI:43474"/>
        <dbReference type="ChEBI" id="CHEBI:46398"/>
        <dbReference type="ChEBI" id="CHEBI:58359"/>
        <dbReference type="ChEBI" id="CHEBI:456216"/>
        <dbReference type="EC" id="6.3.4.2"/>
    </reaction>
</comment>
<comment type="catalytic activity">
    <reaction evidence="1">
        <text>L-glutamine + H2O = L-glutamate + NH4(+)</text>
        <dbReference type="Rhea" id="RHEA:15889"/>
        <dbReference type="ChEBI" id="CHEBI:15377"/>
        <dbReference type="ChEBI" id="CHEBI:28938"/>
        <dbReference type="ChEBI" id="CHEBI:29985"/>
        <dbReference type="ChEBI" id="CHEBI:58359"/>
    </reaction>
</comment>
<comment type="catalytic activity">
    <reaction evidence="1">
        <text>UTP + NH4(+) + ATP = CTP + ADP + phosphate + 2 H(+)</text>
        <dbReference type="Rhea" id="RHEA:16597"/>
        <dbReference type="ChEBI" id="CHEBI:15378"/>
        <dbReference type="ChEBI" id="CHEBI:28938"/>
        <dbReference type="ChEBI" id="CHEBI:30616"/>
        <dbReference type="ChEBI" id="CHEBI:37563"/>
        <dbReference type="ChEBI" id="CHEBI:43474"/>
        <dbReference type="ChEBI" id="CHEBI:46398"/>
        <dbReference type="ChEBI" id="CHEBI:456216"/>
    </reaction>
</comment>
<comment type="activity regulation">
    <text evidence="1">Allosterically activated by GTP, when glutamine is the substrate; GTP has no effect on the reaction when ammonia is the substrate. The allosteric effector GTP functions by stabilizing the protein conformation that binds the tetrahedral intermediate(s) formed during glutamine hydrolysis. Inhibited by the product CTP, via allosteric rather than competitive inhibition.</text>
</comment>
<comment type="pathway">
    <text evidence="1">Pyrimidine metabolism; CTP biosynthesis via de novo pathway; CTP from UDP: step 2/2.</text>
</comment>
<comment type="subunit">
    <text evidence="1">Homotetramer.</text>
</comment>
<comment type="miscellaneous">
    <text evidence="1">CTPSs have evolved a hybrid strategy for distinguishing between UTP and CTP. The overlapping regions of the product feedback inhibitory and substrate sites recognize a common feature in both compounds, the triphosphate moiety. To differentiate isosteric substrate and product pyrimidine rings, an additional pocket far from the expected kinase/ligase catalytic site, specifically recognizes the cytosine and ribose portions of the product inhibitor.</text>
</comment>
<comment type="similarity">
    <text evidence="1">Belongs to the CTP synthase family.</text>
</comment>
<name>PYRG_ECO24</name>
<dbReference type="EC" id="6.3.4.2" evidence="1"/>
<dbReference type="EMBL" id="CP000800">
    <property type="protein sequence ID" value="ABV17371.1"/>
    <property type="molecule type" value="Genomic_DNA"/>
</dbReference>
<dbReference type="RefSeq" id="WP_000210878.1">
    <property type="nucleotide sequence ID" value="NC_009801.1"/>
</dbReference>
<dbReference type="SMR" id="A7ZQM3"/>
<dbReference type="MEROPS" id="C26.964"/>
<dbReference type="GeneID" id="93779218"/>
<dbReference type="KEGG" id="ecw:EcE24377A_3084"/>
<dbReference type="HOGENOM" id="CLU_011675_5_0_6"/>
<dbReference type="UniPathway" id="UPA00159">
    <property type="reaction ID" value="UER00277"/>
</dbReference>
<dbReference type="Proteomes" id="UP000001122">
    <property type="component" value="Chromosome"/>
</dbReference>
<dbReference type="GO" id="GO:0005829">
    <property type="term" value="C:cytosol"/>
    <property type="evidence" value="ECO:0007669"/>
    <property type="project" value="TreeGrafter"/>
</dbReference>
<dbReference type="GO" id="GO:0005524">
    <property type="term" value="F:ATP binding"/>
    <property type="evidence" value="ECO:0007669"/>
    <property type="project" value="UniProtKB-KW"/>
</dbReference>
<dbReference type="GO" id="GO:0003883">
    <property type="term" value="F:CTP synthase activity"/>
    <property type="evidence" value="ECO:0007669"/>
    <property type="project" value="UniProtKB-UniRule"/>
</dbReference>
<dbReference type="GO" id="GO:0004359">
    <property type="term" value="F:glutaminase activity"/>
    <property type="evidence" value="ECO:0007669"/>
    <property type="project" value="RHEA"/>
</dbReference>
<dbReference type="GO" id="GO:0042802">
    <property type="term" value="F:identical protein binding"/>
    <property type="evidence" value="ECO:0007669"/>
    <property type="project" value="TreeGrafter"/>
</dbReference>
<dbReference type="GO" id="GO:0046872">
    <property type="term" value="F:metal ion binding"/>
    <property type="evidence" value="ECO:0007669"/>
    <property type="project" value="UniProtKB-KW"/>
</dbReference>
<dbReference type="GO" id="GO:0044210">
    <property type="term" value="P:'de novo' CTP biosynthetic process"/>
    <property type="evidence" value="ECO:0007669"/>
    <property type="project" value="UniProtKB-UniRule"/>
</dbReference>
<dbReference type="GO" id="GO:0019856">
    <property type="term" value="P:pyrimidine nucleobase biosynthetic process"/>
    <property type="evidence" value="ECO:0007669"/>
    <property type="project" value="TreeGrafter"/>
</dbReference>
<dbReference type="CDD" id="cd03113">
    <property type="entry name" value="CTPS_N"/>
    <property type="match status" value="1"/>
</dbReference>
<dbReference type="CDD" id="cd01746">
    <property type="entry name" value="GATase1_CTP_Synthase"/>
    <property type="match status" value="1"/>
</dbReference>
<dbReference type="FunFam" id="3.40.50.300:FF:000009">
    <property type="entry name" value="CTP synthase"/>
    <property type="match status" value="1"/>
</dbReference>
<dbReference type="FunFam" id="3.40.50.880:FF:000002">
    <property type="entry name" value="CTP synthase"/>
    <property type="match status" value="1"/>
</dbReference>
<dbReference type="Gene3D" id="3.40.50.880">
    <property type="match status" value="1"/>
</dbReference>
<dbReference type="Gene3D" id="3.40.50.300">
    <property type="entry name" value="P-loop containing nucleotide triphosphate hydrolases"/>
    <property type="match status" value="1"/>
</dbReference>
<dbReference type="HAMAP" id="MF_01227">
    <property type="entry name" value="PyrG"/>
    <property type="match status" value="1"/>
</dbReference>
<dbReference type="InterPro" id="IPR029062">
    <property type="entry name" value="Class_I_gatase-like"/>
</dbReference>
<dbReference type="InterPro" id="IPR004468">
    <property type="entry name" value="CTP_synthase"/>
</dbReference>
<dbReference type="InterPro" id="IPR017456">
    <property type="entry name" value="CTP_synthase_N"/>
</dbReference>
<dbReference type="InterPro" id="IPR017926">
    <property type="entry name" value="GATASE"/>
</dbReference>
<dbReference type="InterPro" id="IPR033828">
    <property type="entry name" value="GATase1_CTP_Synthase"/>
</dbReference>
<dbReference type="InterPro" id="IPR027417">
    <property type="entry name" value="P-loop_NTPase"/>
</dbReference>
<dbReference type="NCBIfam" id="NF003792">
    <property type="entry name" value="PRK05380.1"/>
    <property type="match status" value="1"/>
</dbReference>
<dbReference type="NCBIfam" id="TIGR00337">
    <property type="entry name" value="PyrG"/>
    <property type="match status" value="1"/>
</dbReference>
<dbReference type="PANTHER" id="PTHR11550">
    <property type="entry name" value="CTP SYNTHASE"/>
    <property type="match status" value="1"/>
</dbReference>
<dbReference type="PANTHER" id="PTHR11550:SF0">
    <property type="entry name" value="CTP SYNTHASE-RELATED"/>
    <property type="match status" value="1"/>
</dbReference>
<dbReference type="Pfam" id="PF06418">
    <property type="entry name" value="CTP_synth_N"/>
    <property type="match status" value="1"/>
</dbReference>
<dbReference type="Pfam" id="PF00117">
    <property type="entry name" value="GATase"/>
    <property type="match status" value="1"/>
</dbReference>
<dbReference type="SUPFAM" id="SSF52317">
    <property type="entry name" value="Class I glutamine amidotransferase-like"/>
    <property type="match status" value="1"/>
</dbReference>
<dbReference type="SUPFAM" id="SSF52540">
    <property type="entry name" value="P-loop containing nucleoside triphosphate hydrolases"/>
    <property type="match status" value="1"/>
</dbReference>
<dbReference type="PROSITE" id="PS51273">
    <property type="entry name" value="GATASE_TYPE_1"/>
    <property type="match status" value="1"/>
</dbReference>
<protein>
    <recommendedName>
        <fullName evidence="1">CTP synthase</fullName>
        <ecNumber evidence="1">6.3.4.2</ecNumber>
    </recommendedName>
    <alternativeName>
        <fullName evidence="1">Cytidine 5'-triphosphate synthase</fullName>
    </alternativeName>
    <alternativeName>
        <fullName evidence="1">Cytidine triphosphate synthetase</fullName>
        <shortName evidence="1">CTP synthetase</shortName>
        <shortName evidence="1">CTPS</shortName>
    </alternativeName>
    <alternativeName>
        <fullName evidence="1">UTP--ammonia ligase</fullName>
    </alternativeName>
</protein>